<dbReference type="EC" id="4.99.1.12" evidence="1"/>
<dbReference type="EMBL" id="CP000969">
    <property type="protein sequence ID" value="ACB10154.1"/>
    <property type="molecule type" value="Genomic_DNA"/>
</dbReference>
<dbReference type="RefSeq" id="WP_012311366.1">
    <property type="nucleotide sequence ID" value="NC_010483.1"/>
</dbReference>
<dbReference type="SMR" id="B1L8M5"/>
<dbReference type="KEGG" id="trq:TRQ2_1826"/>
<dbReference type="HOGENOM" id="CLU_028523_2_1_0"/>
<dbReference type="Proteomes" id="UP000001687">
    <property type="component" value="Chromosome"/>
</dbReference>
<dbReference type="GO" id="GO:0016829">
    <property type="term" value="F:lyase activity"/>
    <property type="evidence" value="ECO:0007669"/>
    <property type="project" value="UniProtKB-UniRule"/>
</dbReference>
<dbReference type="GO" id="GO:0016151">
    <property type="term" value="F:nickel cation binding"/>
    <property type="evidence" value="ECO:0007669"/>
    <property type="project" value="UniProtKB-UniRule"/>
</dbReference>
<dbReference type="GO" id="GO:0051604">
    <property type="term" value="P:protein maturation"/>
    <property type="evidence" value="ECO:0007669"/>
    <property type="project" value="UniProtKB-UniRule"/>
</dbReference>
<dbReference type="Gene3D" id="3.10.20.300">
    <property type="entry name" value="mk0293 like domain"/>
    <property type="match status" value="1"/>
</dbReference>
<dbReference type="Gene3D" id="3.30.70.1380">
    <property type="entry name" value="Transcriptional regulatory protein pf0864 domain like"/>
    <property type="match status" value="1"/>
</dbReference>
<dbReference type="HAMAP" id="MF_01074">
    <property type="entry name" value="LarC"/>
    <property type="match status" value="1"/>
</dbReference>
<dbReference type="InterPro" id="IPR002822">
    <property type="entry name" value="Ni_insertion"/>
</dbReference>
<dbReference type="NCBIfam" id="TIGR00299">
    <property type="entry name" value="nickel pincer cofactor biosynthesis protein LarC"/>
    <property type="match status" value="1"/>
</dbReference>
<dbReference type="PANTHER" id="PTHR36566">
    <property type="entry name" value="NICKEL INSERTION PROTEIN-RELATED"/>
    <property type="match status" value="1"/>
</dbReference>
<dbReference type="PANTHER" id="PTHR36566:SF1">
    <property type="entry name" value="PYRIDINIUM-3,5-BISTHIOCARBOXYLIC ACID MONONUCLEOTIDE NICKEL INSERTION PROTEIN"/>
    <property type="match status" value="1"/>
</dbReference>
<dbReference type="Pfam" id="PF01969">
    <property type="entry name" value="Ni_insertion"/>
    <property type="match status" value="1"/>
</dbReference>
<feature type="chain" id="PRO_1000136697" description="Pyridinium-3,5-bisthiocarboxylic acid mononucleotide nickel insertion protein">
    <location>
        <begin position="1"/>
        <end position="402"/>
    </location>
</feature>
<keyword id="KW-0456">Lyase</keyword>
<keyword id="KW-0533">Nickel</keyword>
<comment type="function">
    <text evidence="1">Involved in the biosynthesis of a nickel-pincer cofactor ((SCS)Ni(II) pincer complex). Binds Ni(2+), and functions in nickel delivery to pyridinium-3,5-bisthiocarboxylic acid mononucleotide (P2TMN), to form the mature cofactor. Is thus probably required for the activation of nickel-pincer cofactor-dependent enzymes.</text>
</comment>
<comment type="catalytic activity">
    <reaction evidence="1">
        <text>Ni(II)-pyridinium-3,5-bisthiocarboxylate mononucleotide = pyridinium-3,5-bisthiocarboxylate mononucleotide + Ni(2+)</text>
        <dbReference type="Rhea" id="RHEA:54784"/>
        <dbReference type="ChEBI" id="CHEBI:49786"/>
        <dbReference type="ChEBI" id="CHEBI:137372"/>
        <dbReference type="ChEBI" id="CHEBI:137373"/>
        <dbReference type="EC" id="4.99.1.12"/>
    </reaction>
</comment>
<comment type="similarity">
    <text evidence="1">Belongs to the LarC family.</text>
</comment>
<gene>
    <name evidence="1" type="primary">larC</name>
    <name type="ordered locus">TRQ2_1826</name>
</gene>
<protein>
    <recommendedName>
        <fullName evidence="1">Pyridinium-3,5-bisthiocarboxylic acid mononucleotide nickel insertion protein</fullName>
        <shortName evidence="1">P2TMN nickel insertion protein</shortName>
        <ecNumber evidence="1">4.99.1.12</ecNumber>
    </recommendedName>
    <alternativeName>
        <fullName evidence="1">Nickel-pincer cofactor biosynthesis protein LarC</fullName>
    </alternativeName>
</protein>
<organism>
    <name type="scientific">Thermotoga sp. (strain RQ2)</name>
    <dbReference type="NCBI Taxonomy" id="126740"/>
    <lineage>
        <taxon>Bacteria</taxon>
        <taxon>Thermotogati</taxon>
        <taxon>Thermotogota</taxon>
        <taxon>Thermotogae</taxon>
        <taxon>Thermotogales</taxon>
        <taxon>Thermotogaceae</taxon>
        <taxon>Thermotoga</taxon>
    </lineage>
</organism>
<accession>B1L8M5</accession>
<name>LARC_THESQ</name>
<proteinExistence type="inferred from homology"/>
<evidence type="ECO:0000255" key="1">
    <source>
        <dbReference type="HAMAP-Rule" id="MF_01074"/>
    </source>
</evidence>
<reference key="1">
    <citation type="journal article" date="2011" name="J. Bacteriol.">
        <title>Genome sequence of Thermotoga sp. strain RQ2, a hyperthermophilic bacterium isolated from a geothermally heated region of the seafloor near Ribeira Quente, the Azores.</title>
        <authorList>
            <person name="Swithers K.S."/>
            <person name="DiPippo J.L."/>
            <person name="Bruce D.C."/>
            <person name="Detter C."/>
            <person name="Tapia R."/>
            <person name="Han S."/>
            <person name="Saunders E."/>
            <person name="Goodwin L.A."/>
            <person name="Han J."/>
            <person name="Woyke T."/>
            <person name="Pitluck S."/>
            <person name="Pennacchio L."/>
            <person name="Nolan M."/>
            <person name="Mikhailova N."/>
            <person name="Lykidis A."/>
            <person name="Land M.L."/>
            <person name="Brettin T."/>
            <person name="Stetter K.O."/>
            <person name="Nelson K.E."/>
            <person name="Gogarten J.P."/>
            <person name="Noll K.M."/>
        </authorList>
    </citation>
    <scope>NUCLEOTIDE SEQUENCE [LARGE SCALE GENOMIC DNA]</scope>
    <source>
        <strain>RQ2</strain>
    </source>
</reference>
<sequence>MRILYLDPFSGISGDMFLGLLVDLGVDPEKIKSRLEKLNVEFEFVVKKENKKGVTATKVDVVFPGKEHHEDHIVSDHDHHHHHGRHLSEIVEVLSRLEDPLKEKAIRMFETLAEAESKIHGLSKEKVHFHEVGAMDAVIEIAGAVAGLELLGVEKVFCGTVNTGSGFVMTEHGRYPVPAPATAELLKGIPIYVDQKVRTELVTPTGAVILKSLVDEFRTPILRVEKVGYGAGTMDLEIPNVLRGYLGYIEPSERTGDVLIETNVDDMSPQLFGHLMERLFEAGAKDVFFTPIYMKKNRPAVKVSVLCHESKKDEILKLLFKESTSIGARVFYPEKVEATRTVKTVKTEYGEIPVKIASFDSEIVNISPEYEACKKIAQEKGIPLKEVYRAVCKSVSEVRDDV</sequence>